<reference key="1">
    <citation type="journal article" date="2005" name="Nature">
        <title>Sequencing of Aspergillus nidulans and comparative analysis with A. fumigatus and A. oryzae.</title>
        <authorList>
            <person name="Galagan J.E."/>
            <person name="Calvo S.E."/>
            <person name="Cuomo C."/>
            <person name="Ma L.-J."/>
            <person name="Wortman J.R."/>
            <person name="Batzoglou S."/>
            <person name="Lee S.-I."/>
            <person name="Bastuerkmen M."/>
            <person name="Spevak C.C."/>
            <person name="Clutterbuck J."/>
            <person name="Kapitonov V."/>
            <person name="Jurka J."/>
            <person name="Scazzocchio C."/>
            <person name="Farman M.L."/>
            <person name="Butler J."/>
            <person name="Purcell S."/>
            <person name="Harris S."/>
            <person name="Braus G.H."/>
            <person name="Draht O."/>
            <person name="Busch S."/>
            <person name="D'Enfert C."/>
            <person name="Bouchier C."/>
            <person name="Goldman G.H."/>
            <person name="Bell-Pedersen D."/>
            <person name="Griffiths-Jones S."/>
            <person name="Doonan J.H."/>
            <person name="Yu J."/>
            <person name="Vienken K."/>
            <person name="Pain A."/>
            <person name="Freitag M."/>
            <person name="Selker E.U."/>
            <person name="Archer D.B."/>
            <person name="Penalva M.A."/>
            <person name="Oakley B.R."/>
            <person name="Momany M."/>
            <person name="Tanaka T."/>
            <person name="Kumagai T."/>
            <person name="Asai K."/>
            <person name="Machida M."/>
            <person name="Nierman W.C."/>
            <person name="Denning D.W."/>
            <person name="Caddick M.X."/>
            <person name="Hynes M."/>
            <person name="Paoletti M."/>
            <person name="Fischer R."/>
            <person name="Miller B.L."/>
            <person name="Dyer P.S."/>
            <person name="Sachs M.S."/>
            <person name="Osmani S.A."/>
            <person name="Birren B.W."/>
        </authorList>
    </citation>
    <scope>NUCLEOTIDE SEQUENCE [LARGE SCALE GENOMIC DNA]</scope>
    <source>
        <strain>FGSC A4 / ATCC 38163 / CBS 112.46 / NRRL 194 / M139</strain>
    </source>
</reference>
<reference key="2">
    <citation type="journal article" date="2009" name="Fungal Genet. Biol.">
        <title>The 2008 update of the Aspergillus nidulans genome annotation: a community effort.</title>
        <authorList>
            <person name="Wortman J.R."/>
            <person name="Gilsenan J.M."/>
            <person name="Joardar V."/>
            <person name="Deegan J."/>
            <person name="Clutterbuck J."/>
            <person name="Andersen M.R."/>
            <person name="Archer D."/>
            <person name="Bencina M."/>
            <person name="Braus G."/>
            <person name="Coutinho P."/>
            <person name="von Dohren H."/>
            <person name="Doonan J."/>
            <person name="Driessen A.J."/>
            <person name="Durek P."/>
            <person name="Espeso E."/>
            <person name="Fekete E."/>
            <person name="Flipphi M."/>
            <person name="Estrada C.G."/>
            <person name="Geysens S."/>
            <person name="Goldman G."/>
            <person name="de Groot P.W."/>
            <person name="Hansen K."/>
            <person name="Harris S.D."/>
            <person name="Heinekamp T."/>
            <person name="Helmstaedt K."/>
            <person name="Henrissat B."/>
            <person name="Hofmann G."/>
            <person name="Homan T."/>
            <person name="Horio T."/>
            <person name="Horiuchi H."/>
            <person name="James S."/>
            <person name="Jones M."/>
            <person name="Karaffa L."/>
            <person name="Karanyi Z."/>
            <person name="Kato M."/>
            <person name="Keller N."/>
            <person name="Kelly D.E."/>
            <person name="Kiel J.A."/>
            <person name="Kim J.M."/>
            <person name="van der Klei I.J."/>
            <person name="Klis F.M."/>
            <person name="Kovalchuk A."/>
            <person name="Krasevec N."/>
            <person name="Kubicek C.P."/>
            <person name="Liu B."/>
            <person name="Maccabe A."/>
            <person name="Meyer V."/>
            <person name="Mirabito P."/>
            <person name="Miskei M."/>
            <person name="Mos M."/>
            <person name="Mullins J."/>
            <person name="Nelson D.R."/>
            <person name="Nielsen J."/>
            <person name="Oakley B.R."/>
            <person name="Osmani S.A."/>
            <person name="Pakula T."/>
            <person name="Paszewski A."/>
            <person name="Paulsen I."/>
            <person name="Pilsyk S."/>
            <person name="Pocsi I."/>
            <person name="Punt P.J."/>
            <person name="Ram A.F."/>
            <person name="Ren Q."/>
            <person name="Robellet X."/>
            <person name="Robson G."/>
            <person name="Seiboth B."/>
            <person name="van Solingen P."/>
            <person name="Specht T."/>
            <person name="Sun J."/>
            <person name="Taheri-Talesh N."/>
            <person name="Takeshita N."/>
            <person name="Ussery D."/>
            <person name="vanKuyk P.A."/>
            <person name="Visser H."/>
            <person name="van de Vondervoort P.J."/>
            <person name="de Vries R.P."/>
            <person name="Walton J."/>
            <person name="Xiang X."/>
            <person name="Xiong Y."/>
            <person name="Zeng A.P."/>
            <person name="Brandt B.W."/>
            <person name="Cornell M.J."/>
            <person name="van den Hondel C.A."/>
            <person name="Visser J."/>
            <person name="Oliver S.G."/>
            <person name="Turner G."/>
        </authorList>
    </citation>
    <scope>GENOME REANNOTATION</scope>
    <source>
        <strain>FGSC A4 / ATCC 38163 / CBS 112.46 / NRRL 194 / M139</strain>
    </source>
</reference>
<reference key="3">
    <citation type="journal article" date="2012" name="Appl. Environ. Microbiol.">
        <title>Breaking the silence: protein stabilization uncovers silenced biosynthetic gene clusters in the fungus Aspergillus nidulans.</title>
        <authorList>
            <person name="Gerke J."/>
            <person name="Bayram O."/>
            <person name="Feussner K."/>
            <person name="Landesfeind M."/>
            <person name="Shelest E."/>
            <person name="Feussner I."/>
            <person name="Braus G.H."/>
        </authorList>
    </citation>
    <scope>IDENTIFICATION</scope>
    <scope>INDUCTION</scope>
    <scope>FUNCTION</scope>
    <scope>DISRUPTION PHENOTYPE</scope>
    <scope>PATHWAY</scope>
</reference>
<reference key="4">
    <citation type="journal article" date="2012" name="J. Am. Chem. Soc.">
        <title>Illuminating the diversity of aromatic polyketide synthases in Aspergillus nidulans.</title>
        <authorList>
            <person name="Ahuja M."/>
            <person name="Chiang Y.M."/>
            <person name="Chang S.L."/>
            <person name="Praseuth M.B."/>
            <person name="Entwistle R."/>
            <person name="Sanchez J.F."/>
            <person name="Lo H.C."/>
            <person name="Yeh H.H."/>
            <person name="Oakley B.R."/>
            <person name="Wang C.C."/>
        </authorList>
    </citation>
    <scope>FUNCTION</scope>
</reference>
<reference key="5">
    <citation type="journal article" date="2015" name="Genetics">
        <title>Beyond asexual development: modifications in the gene expression profile caused by the absence of the Aspergillus nidulans transcription factor FlbB.</title>
        <authorList>
            <person name="Oiartzabal-Arano E."/>
            <person name="Garzia A."/>
            <person name="Gorostidi A."/>
            <person name="Ugalde U."/>
            <person name="Espeso E.A."/>
            <person name="Etxebeste O."/>
        </authorList>
    </citation>
    <scope>INDUCTION</scope>
</reference>
<proteinExistence type="evidence at transcript level"/>
<gene>
    <name evidence="5" type="primary">dbaE</name>
    <name type="ORF">ANIA_07899</name>
</gene>
<organism>
    <name type="scientific">Emericella nidulans (strain FGSC A4 / ATCC 38163 / CBS 112.46 / NRRL 194 / M139)</name>
    <name type="common">Aspergillus nidulans</name>
    <dbReference type="NCBI Taxonomy" id="227321"/>
    <lineage>
        <taxon>Eukaryota</taxon>
        <taxon>Fungi</taxon>
        <taxon>Dikarya</taxon>
        <taxon>Ascomycota</taxon>
        <taxon>Pezizomycotina</taxon>
        <taxon>Eurotiomycetes</taxon>
        <taxon>Eurotiomycetidae</taxon>
        <taxon>Eurotiales</taxon>
        <taxon>Aspergillaceae</taxon>
        <taxon>Aspergillus</taxon>
        <taxon>Aspergillus subgen. Nidulantes</taxon>
    </lineage>
</organism>
<feature type="chain" id="PRO_0000446359" description="Esterase dbaE">
    <location>
        <begin position="1"/>
        <end position="278"/>
    </location>
</feature>
<feature type="active site" description="Charge relay system" evidence="1">
    <location>
        <position position="124"/>
    </location>
</feature>
<feature type="active site" description="Charge relay system" evidence="1">
    <location>
        <position position="220"/>
    </location>
</feature>
<feature type="active site" description="Charge relay system" evidence="1">
    <location>
        <position position="248"/>
    </location>
</feature>
<sequence length="278" mass="30793">MTIRIPSGEEADYTLHLPRILCLHGGGTNARIFRMQCRVLERFLRSTFRFVYAEAPFAAQPGSDVTSVYKDHGPFKAWLRCTAADPDRSAQEVVKKINLSIATAMYDDDMRGATGEWIALLGFSQGAKVAASILYAQQTIQQRLGERAATRPRFRFAVLMAGRGPLVWLLPETSSGPGSIPMGLVDAASPSMLDSEPELPTDSTEHMLRLPTLHVHGLRDPGLSLHRRLLRSYCQSDSVSLVEWEGEHRVPLKTKDVTAVVDQIYALARDTGVLDSWC</sequence>
<evidence type="ECO:0000250" key="1">
    <source>
        <dbReference type="UniProtKB" id="P38777"/>
    </source>
</evidence>
<evidence type="ECO:0000269" key="2">
    <source>
    </source>
</evidence>
<evidence type="ECO:0000269" key="3">
    <source>
    </source>
</evidence>
<evidence type="ECO:0000269" key="4">
    <source>
    </source>
</evidence>
<evidence type="ECO:0000303" key="5">
    <source>
    </source>
</evidence>
<evidence type="ECO:0000305" key="6"/>
<evidence type="ECO:0000305" key="7">
    <source>
    </source>
</evidence>
<name>DBAE_EMENI</name>
<keyword id="KW-0378">Hydrolase</keyword>
<keyword id="KW-1185">Reference proteome</keyword>
<dbReference type="EC" id="3.1.2.-" evidence="7"/>
<dbReference type="EMBL" id="AACD01000135">
    <property type="protein sequence ID" value="EAA59553.1"/>
    <property type="molecule type" value="Genomic_DNA"/>
</dbReference>
<dbReference type="EMBL" id="BN001302">
    <property type="protein sequence ID" value="CBF73486.1"/>
    <property type="molecule type" value="Genomic_DNA"/>
</dbReference>
<dbReference type="RefSeq" id="XP_681168.1">
    <property type="nucleotide sequence ID" value="XM_676076.1"/>
</dbReference>
<dbReference type="SMR" id="Q5AUY1"/>
<dbReference type="ESTHER" id="emeni-dbae">
    <property type="family name" value="FSH1"/>
</dbReference>
<dbReference type="EnsemblFungi" id="CBF73486">
    <property type="protein sequence ID" value="CBF73486"/>
    <property type="gene ID" value="ANIA_07899"/>
</dbReference>
<dbReference type="GeneID" id="2869190"/>
<dbReference type="KEGG" id="ani:ANIA_07899"/>
<dbReference type="VEuPathDB" id="FungiDB:AN7899"/>
<dbReference type="eggNOG" id="KOG2551">
    <property type="taxonomic scope" value="Eukaryota"/>
</dbReference>
<dbReference type="HOGENOM" id="CLU_051938_0_2_1"/>
<dbReference type="InParanoid" id="Q5AUY1"/>
<dbReference type="OMA" id="PRMLCLH"/>
<dbReference type="OrthoDB" id="414698at2759"/>
<dbReference type="Proteomes" id="UP000000560">
    <property type="component" value="Chromosome II"/>
</dbReference>
<dbReference type="GO" id="GO:0005737">
    <property type="term" value="C:cytoplasm"/>
    <property type="evidence" value="ECO:0000318"/>
    <property type="project" value="GO_Central"/>
</dbReference>
<dbReference type="GO" id="GO:0005634">
    <property type="term" value="C:nucleus"/>
    <property type="evidence" value="ECO:0000318"/>
    <property type="project" value="GO_Central"/>
</dbReference>
<dbReference type="GO" id="GO:0016787">
    <property type="term" value="F:hydrolase activity"/>
    <property type="evidence" value="ECO:0000318"/>
    <property type="project" value="GO_Central"/>
</dbReference>
<dbReference type="GO" id="GO:0044550">
    <property type="term" value="P:secondary metabolite biosynthetic process"/>
    <property type="evidence" value="ECO:0000270"/>
    <property type="project" value="AspGD"/>
</dbReference>
<dbReference type="FunFam" id="3.40.50.1820:FF:000296">
    <property type="entry name" value="Probable esterase afoC"/>
    <property type="match status" value="1"/>
</dbReference>
<dbReference type="Gene3D" id="3.40.50.1820">
    <property type="entry name" value="alpha/beta hydrolase"/>
    <property type="match status" value="1"/>
</dbReference>
<dbReference type="InterPro" id="IPR029058">
    <property type="entry name" value="AB_hydrolase_fold"/>
</dbReference>
<dbReference type="InterPro" id="IPR005645">
    <property type="entry name" value="FSH-like_dom"/>
</dbReference>
<dbReference type="InterPro" id="IPR050593">
    <property type="entry name" value="LovG"/>
</dbReference>
<dbReference type="PANTHER" id="PTHR48070:SF3">
    <property type="entry name" value="ESTERASE DBAE-RELATED"/>
    <property type="match status" value="1"/>
</dbReference>
<dbReference type="PANTHER" id="PTHR48070">
    <property type="entry name" value="ESTERASE OVCA2"/>
    <property type="match status" value="1"/>
</dbReference>
<dbReference type="Pfam" id="PF03959">
    <property type="entry name" value="FSH1"/>
    <property type="match status" value="1"/>
</dbReference>
<dbReference type="SUPFAM" id="SSF53474">
    <property type="entry name" value="alpha/beta-Hydrolases"/>
    <property type="match status" value="1"/>
</dbReference>
<comment type="function">
    <text evidence="2 3 7">Esterase; part of the gene cluster that mediates the biosynthesis of the antibiotic 2,4-dihydroxy-3-methyl-6-(2-oxopropyl)benzaldehyde (DHMBA) and its derivatives (PubMed:22510154, PubMed:23001671). The direct non-reducing polyketide synthase dbaI product is 2,4-dihydroxy-3-methyl-6-(2-oxopropyl)benzaldehyde (DHMBA), produced by condensation of one acetyl-CoA starter unit with 4 malonyl-CoA units and one methylation step (PubMed:22510154). The FAD-dependent monooxygenase dbaH is responsible for the synthesis of yellow pigments derived from the oxidation of DHMBA (PubMed:23001671). The roles of dbaB, C, E and F have still to be determined (Probable).</text>
</comment>
<comment type="pathway">
    <text evidence="7">Secondary metabolite biosynthesis.</text>
</comment>
<comment type="induction">
    <text evidence="3 4">Deletion of the conserved eukaryotic csnE deneddylase subunit of the COP9 signalosome leading to defect in protein degradation results in the activation of the silenced dba gene cluster (PubMed:23001671). Expression is positively regulated by the dba cluster specific transcription factor dbaA (PubMed:23001671). Expression is also controlled by the transcription factor flbB (PubMed:25701285).</text>
</comment>
<comment type="disruption phenotype">
    <text evidence="3">Reduces the amounts of DHMDA produced.</text>
</comment>
<comment type="similarity">
    <text evidence="6">Belongs to the LovG family.</text>
</comment>
<protein>
    <recommendedName>
        <fullName evidence="5">Esterase dbaE</fullName>
        <ecNumber evidence="7">3.1.2.-</ecNumber>
    </recommendedName>
    <alternativeName>
        <fullName evidence="5">Derivative of benzaldehyde biosynthesis cluster protein E</fullName>
    </alternativeName>
</protein>
<accession>Q5AUY1</accession>
<accession>A0A1U8QKJ2</accession>
<accession>C8V4J9</accession>